<organism>
    <name type="scientific">Penicillium rubens</name>
    <dbReference type="NCBI Taxonomy" id="1108849"/>
    <lineage>
        <taxon>Eukaryota</taxon>
        <taxon>Fungi</taxon>
        <taxon>Dikarya</taxon>
        <taxon>Ascomycota</taxon>
        <taxon>Pezizomycotina</taxon>
        <taxon>Eurotiomycetes</taxon>
        <taxon>Eurotiomycetidae</taxon>
        <taxon>Eurotiales</taxon>
        <taxon>Aspergillaceae</taxon>
        <taxon>Penicillium</taxon>
        <taxon>Penicillium chrysogenum species complex</taxon>
    </lineage>
</organism>
<evidence type="ECO:0000250" key="1">
    <source>
        <dbReference type="UniProtKB" id="Q5JIZ5"/>
    </source>
</evidence>
<evidence type="ECO:0000250" key="2">
    <source>
        <dbReference type="UniProtKB" id="Q9Y749"/>
    </source>
</evidence>
<evidence type="ECO:0000255" key="3"/>
<evidence type="ECO:0000255" key="4">
    <source>
        <dbReference type="PROSITE-ProRule" id="PRU00498"/>
    </source>
</evidence>
<evidence type="ECO:0000255" key="5">
    <source>
        <dbReference type="PROSITE-ProRule" id="PRU01240"/>
    </source>
</evidence>
<evidence type="ECO:0000269" key="6">
    <source>
    </source>
</evidence>
<evidence type="ECO:0000303" key="7">
    <source>
    </source>
</evidence>
<evidence type="ECO:0000305" key="8"/>
<evidence type="ECO:0000305" key="9">
    <source>
    </source>
</evidence>
<evidence type="ECO:0000312" key="10">
    <source>
        <dbReference type="EMBL" id="AAF23726.1"/>
    </source>
</evidence>
<accession>Q9URR2</accession>
<protein>
    <recommendedName>
        <fullName evidence="8">Subtilisin-like serine protease Pen ch 13.0101</fullName>
        <ecNumber evidence="2">3.4.21.-</ecNumber>
    </recommendedName>
    <alternativeName>
        <fullName evidence="7">Alkaline serine protease</fullName>
    </alternativeName>
    <alternativeName>
        <fullName evidence="7">Allergen Pen n 13</fullName>
    </alternativeName>
    <allergenName evidence="8">Pen ch 13.0101</allergenName>
</protein>
<comment type="function">
    <text evidence="2">Serine protease.</text>
</comment>
<comment type="subcellular location">
    <subcellularLocation>
        <location evidence="2 3">Secreted</location>
    </subcellularLocation>
</comment>
<comment type="allergen">
    <text evidence="6">Causes an allergic reaction in human. Binds to IgE of Penicillium-sensitive patients.</text>
</comment>
<comment type="similarity">
    <text evidence="3 8">Belongs to the peptidase S8 family.</text>
</comment>
<feature type="signal peptide" evidence="3">
    <location>
        <begin position="1"/>
        <end position="19"/>
    </location>
</feature>
<feature type="propeptide" id="PRO_0000446678" description="Removed in mature form" evidence="3 9">
    <location>
        <begin position="20"/>
        <end position="115"/>
    </location>
</feature>
<feature type="chain" id="PRO_5004335276" description="Subtilisin-like serine protease Pen ch 13.0101" evidence="9">
    <location>
        <begin position="116"/>
        <end position="397"/>
    </location>
</feature>
<feature type="domain" description="Inhibitor I9" evidence="3">
    <location>
        <begin position="35"/>
        <end position="113"/>
    </location>
</feature>
<feature type="domain" description="Peptidase S8" evidence="5">
    <location>
        <begin position="125"/>
        <end position="397"/>
    </location>
</feature>
<feature type="active site" description="Charge relay system" evidence="5">
    <location>
        <position position="157"/>
    </location>
</feature>
<feature type="active site" description="Charge relay system" evidence="5">
    <location>
        <position position="188"/>
    </location>
</feature>
<feature type="active site" description="Charge relay system" evidence="5">
    <location>
        <position position="343"/>
    </location>
</feature>
<feature type="site" description="Important for catalytic activity" evidence="1">
    <location>
        <position position="280"/>
    </location>
</feature>
<feature type="glycosylation site" description="N-linked (GlcNAc...) asparagine" evidence="4">
    <location>
        <position position="113"/>
    </location>
</feature>
<feature type="glycosylation site" description="N-linked (GlcNAc...) asparagine" evidence="4">
    <location>
        <position position="249"/>
    </location>
</feature>
<feature type="glycosylation site" description="N-linked (GlcNAc...) asparagine" evidence="4">
    <location>
        <position position="284"/>
    </location>
</feature>
<dbReference type="EC" id="3.4.21.-" evidence="2"/>
<dbReference type="EMBL" id="AF193420">
    <property type="protein sequence ID" value="AAF23726.1"/>
    <property type="molecule type" value="mRNA"/>
</dbReference>
<dbReference type="PIR" id="JC7208">
    <property type="entry name" value="JC7208"/>
</dbReference>
<dbReference type="SMR" id="Q9URR2"/>
<dbReference type="Allergome" id="3406">
    <property type="allergen name" value="Pen ch 13.0101"/>
</dbReference>
<dbReference type="Allergome" id="524">
    <property type="allergen name" value="Pen ch 13"/>
</dbReference>
<dbReference type="MEROPS" id="S08.025"/>
<dbReference type="GO" id="GO:0005615">
    <property type="term" value="C:extracellular space"/>
    <property type="evidence" value="ECO:0000250"/>
    <property type="project" value="UniProtKB"/>
</dbReference>
<dbReference type="GO" id="GO:0004252">
    <property type="term" value="F:serine-type endopeptidase activity"/>
    <property type="evidence" value="ECO:0000250"/>
    <property type="project" value="UniProtKB"/>
</dbReference>
<dbReference type="GO" id="GO:0006508">
    <property type="term" value="P:proteolysis"/>
    <property type="evidence" value="ECO:0000250"/>
    <property type="project" value="UniProtKB"/>
</dbReference>
<dbReference type="CDD" id="cd04077">
    <property type="entry name" value="Peptidases_S8_PCSK9_ProteinaseK_like"/>
    <property type="match status" value="1"/>
</dbReference>
<dbReference type="FunFam" id="3.40.50.200:FF:000014">
    <property type="entry name" value="Proteinase K"/>
    <property type="match status" value="1"/>
</dbReference>
<dbReference type="Gene3D" id="3.30.70.80">
    <property type="entry name" value="Peptidase S8 propeptide/proteinase inhibitor I9"/>
    <property type="match status" value="1"/>
</dbReference>
<dbReference type="Gene3D" id="3.40.50.200">
    <property type="entry name" value="Peptidase S8/S53 domain"/>
    <property type="match status" value="1"/>
</dbReference>
<dbReference type="InterPro" id="IPR034193">
    <property type="entry name" value="PCSK9_ProteinaseK-like"/>
</dbReference>
<dbReference type="InterPro" id="IPR000209">
    <property type="entry name" value="Peptidase_S8/S53_dom"/>
</dbReference>
<dbReference type="InterPro" id="IPR036852">
    <property type="entry name" value="Peptidase_S8/S53_dom_sf"/>
</dbReference>
<dbReference type="InterPro" id="IPR023828">
    <property type="entry name" value="Peptidase_S8_Ser-AS"/>
</dbReference>
<dbReference type="InterPro" id="IPR050131">
    <property type="entry name" value="Peptidase_S8_subtilisin-like"/>
</dbReference>
<dbReference type="InterPro" id="IPR015500">
    <property type="entry name" value="Peptidase_S8_subtilisin-rel"/>
</dbReference>
<dbReference type="InterPro" id="IPR010259">
    <property type="entry name" value="S8pro/Inhibitor_I9"/>
</dbReference>
<dbReference type="InterPro" id="IPR037045">
    <property type="entry name" value="S8pro/Inhibitor_I9_sf"/>
</dbReference>
<dbReference type="PANTHER" id="PTHR43806:SF58">
    <property type="entry name" value="ALKALINE PROTEASE 1-RELATED"/>
    <property type="match status" value="1"/>
</dbReference>
<dbReference type="PANTHER" id="PTHR43806">
    <property type="entry name" value="PEPTIDASE S8"/>
    <property type="match status" value="1"/>
</dbReference>
<dbReference type="Pfam" id="PF05922">
    <property type="entry name" value="Inhibitor_I9"/>
    <property type="match status" value="1"/>
</dbReference>
<dbReference type="Pfam" id="PF00082">
    <property type="entry name" value="Peptidase_S8"/>
    <property type="match status" value="1"/>
</dbReference>
<dbReference type="PRINTS" id="PR00723">
    <property type="entry name" value="SUBTILISIN"/>
</dbReference>
<dbReference type="SUPFAM" id="SSF54897">
    <property type="entry name" value="Protease propeptides/inhibitors"/>
    <property type="match status" value="1"/>
</dbReference>
<dbReference type="SUPFAM" id="SSF52743">
    <property type="entry name" value="Subtilisin-like"/>
    <property type="match status" value="1"/>
</dbReference>
<dbReference type="PROSITE" id="PS51892">
    <property type="entry name" value="SUBTILASE"/>
    <property type="match status" value="1"/>
</dbReference>
<dbReference type="PROSITE" id="PS00138">
    <property type="entry name" value="SUBTILASE_SER"/>
    <property type="match status" value="1"/>
</dbReference>
<sequence>MGFLKVLATSLATLAVVDAGTLLTASNTDAVIPSSYIVVMNDDVSTAEFSTHREWATNVHARLSRRKNGETGPGKHFEINGLKGYTASFDENTAKDIANDPAVKYIEPDMIVNATANVVQSNVPSWGLARISSKRTGTTSYTYDSTAGEGVVFYGVDTGIDISHSDFGGRAKWGTNVVDNDNTDGNGHGTHTASTAAGSKYGVAKKATLVAVKVLGADGSGTNSGVISGMDWAVKDAKSRGANGKYVMNTSLGGEFSKAVNDAAANVVKSGIFLSVAAGNEAENASNSSPASAAEACTIAASTSTDGSASFTNFGSVVDLYAPGQSITAAYPGGGSKTLSGTSMAAPHVAGVAAYLMALEGVSAGNACARIVQLATSSISRAPSGTTSKLLYNGINV</sequence>
<proteinExistence type="evidence at protein level"/>
<name>PEN13_PENRB</name>
<reference evidence="10" key="1">
    <citation type="journal article" date="2000" name="Biochem. Biophys. Res. Commun.">
        <title>Characterization of Pen n 13, a major allergen from the mold Penicillium notatum.</title>
        <authorList>
            <person name="Chow L.P."/>
            <person name="Chiou S.H."/>
            <person name="Hsiao M.C."/>
            <person name="Yu C.J."/>
            <person name="Chiang B.L."/>
        </authorList>
    </citation>
    <scope>NUCLEOTIDE SEQUENCE [MRNA]</scope>
    <scope>PROTEIN SEQUENCE OF 116-128</scope>
    <scope>ALLERGEN</scope>
    <source>
        <strain evidence="7 10">ATCC 9179 / BCRC 30568 / CBS 197.46 / NRRL 832 / QM 940</strain>
        <tissue evidence="7">Mycelium</tissue>
    </source>
</reference>
<keyword id="KW-0020">Allergen</keyword>
<keyword id="KW-0903">Direct protein sequencing</keyword>
<keyword id="KW-0325">Glycoprotein</keyword>
<keyword id="KW-0378">Hydrolase</keyword>
<keyword id="KW-0645">Protease</keyword>
<keyword id="KW-0964">Secreted</keyword>
<keyword id="KW-0720">Serine protease</keyword>
<keyword id="KW-0732">Signal</keyword>
<keyword id="KW-0865">Zymogen</keyword>